<feature type="chain" id="PRO_0000127300" description="Myc proto-oncogene protein">
    <location>
        <begin position="1"/>
        <end position="453"/>
    </location>
</feature>
<feature type="domain" description="bHLH" evidence="4">
    <location>
        <begin position="368"/>
        <end position="420"/>
    </location>
</feature>
<feature type="region of interest" description="Disordered" evidence="5">
    <location>
        <begin position="216"/>
        <end position="373"/>
    </location>
</feature>
<feature type="region of interest" description="Leucine-zipper">
    <location>
        <begin position="427"/>
        <end position="448"/>
    </location>
</feature>
<feature type="short sequence motif" description="9aaTAD" evidence="2">
    <location>
        <begin position="115"/>
        <end position="123"/>
    </location>
</feature>
<feature type="short sequence motif" description="UBR5-degron" evidence="2">
    <location>
        <begin position="369"/>
        <end position="378"/>
    </location>
</feature>
<feature type="compositionally biased region" description="Low complexity" evidence="5">
    <location>
        <begin position="217"/>
        <end position="244"/>
    </location>
</feature>
<feature type="compositionally biased region" description="Acidic residues" evidence="5">
    <location>
        <begin position="265"/>
        <end position="277"/>
    </location>
</feature>
<feature type="compositionally biased region" description="Basic and acidic residues" evidence="5">
    <location>
        <begin position="280"/>
        <end position="292"/>
    </location>
</feature>
<feature type="compositionally biased region" description="Basic and acidic residues" evidence="5">
    <location>
        <begin position="329"/>
        <end position="345"/>
    </location>
</feature>
<feature type="compositionally biased region" description="Polar residues" evidence="5">
    <location>
        <begin position="349"/>
        <end position="361"/>
    </location>
</feature>
<feature type="modified residue" description="Phosphoserine" evidence="2">
    <location>
        <position position="20"/>
    </location>
</feature>
<feature type="modified residue" description="Phosphothreonine; by GSK3; alternate" evidence="2">
    <location>
        <position position="72"/>
    </location>
</feature>
<feature type="modified residue" description="Phosphoserine; by DYRK2, GSK3 and CDK2" evidence="2">
    <location>
        <position position="76"/>
    </location>
</feature>
<feature type="modified residue" description="Phosphoserine" evidence="2">
    <location>
        <position position="85"/>
    </location>
</feature>
<feature type="modified residue" description="Phosphoserine" evidence="2">
    <location>
        <position position="96"/>
    </location>
</feature>
<feature type="modified residue" description="N6-acetyllysine; by PCAF; alternate" evidence="2">
    <location>
        <position position="158"/>
    </location>
</feature>
<feature type="modified residue" description="N6-acetyllysine; alternate" evidence="2">
    <location>
        <position position="163"/>
    </location>
</feature>
<feature type="modified residue" description="Phosphoserine" evidence="2">
    <location>
        <position position="166"/>
    </location>
</feature>
<feature type="modified residue" description="N6-acetyllysine; by PCAF" evidence="2">
    <location>
        <position position="172"/>
    </location>
</feature>
<feature type="modified residue" description="Phosphoserine" evidence="2">
    <location>
        <position position="174"/>
    </location>
</feature>
<feature type="modified residue" description="Phosphoserine" evidence="2">
    <location>
        <position position="176"/>
    </location>
</feature>
<feature type="modified residue" description="N6-acetyllysine; by PCAF" evidence="2">
    <location>
        <position position="289"/>
    </location>
</feature>
<feature type="modified residue" description="Phosphoserine" evidence="2">
    <location>
        <position position="307"/>
    </location>
</feature>
<feature type="modified residue" description="Phosphoserine" evidence="2">
    <location>
        <position position="328"/>
    </location>
</feature>
<feature type="modified residue" description="Phosphothreonine" evidence="2">
    <location>
        <position position="329"/>
    </location>
</feature>
<feature type="modified residue" description="N6-acetyllysine; by PCAF" evidence="2">
    <location>
        <position position="331"/>
    </location>
</feature>
<feature type="modified residue" description="N6-acetyllysine; by PCAF" evidence="2">
    <location>
        <position position="337"/>
    </location>
</feature>
<feature type="modified residue" description="Phosphoserine; by PIM2; in vitro" evidence="3">
    <location>
        <position position="343"/>
    </location>
</feature>
<feature type="modified residue" description="Phosphoserine" evidence="2">
    <location>
        <position position="358"/>
    </location>
</feature>
<feature type="modified residue" description="Phosphoserine" evidence="2">
    <location>
        <position position="361"/>
    </location>
</feature>
<feature type="modified residue" description="Phosphoserine" evidence="2">
    <location>
        <position position="362"/>
    </location>
</feature>
<feature type="modified residue" description="N6-acetyllysine; by PCAF" evidence="2">
    <location>
        <position position="385"/>
    </location>
</feature>
<feature type="glycosylation site" description="O-linked (GlcNAc) threonine; alternate" evidence="1">
    <location>
        <position position="72"/>
    </location>
</feature>
<feature type="cross-link" description="Glycyl lysine isopeptide (Lys-Gly) (interchain with G-Cter in SUMO2)" evidence="2">
    <location>
        <position position="66"/>
    </location>
</feature>
<feature type="cross-link" description="Glycyl lysine isopeptide (Lys-Gly) (interchain with G-Cter in SUMO2); alternate" evidence="2">
    <location>
        <position position="158"/>
    </location>
</feature>
<feature type="cross-link" description="Glycyl lysine isopeptide (Lys-Gly) (interchain with G-Cter in SUMO2); alternate" evidence="2">
    <location>
        <position position="163"/>
    </location>
</feature>
<feature type="cross-link" description="Glycyl lysine isopeptide (Lys-Gly) (interchain with G-Cter in SUMO2)" evidence="2">
    <location>
        <position position="312"/>
    </location>
</feature>
<feature type="splice variant" id="VSP_061785" description="In isoform 1.">
    <location>
        <begin position="1"/>
        <end position="14"/>
    </location>
</feature>
<feature type="turn" evidence="12">
    <location>
        <begin position="35"/>
        <end position="37"/>
    </location>
</feature>
<dbReference type="EMBL" id="Y00396">
    <property type="protein sequence ID" value="CAA68459.2"/>
    <property type="molecule type" value="Genomic_DNA"/>
</dbReference>
<dbReference type="EMBL" id="AY679729">
    <property type="protein sequence ID" value="AAT92511.1"/>
    <property type="molecule type" value="mRNA"/>
</dbReference>
<dbReference type="EMBL" id="AY679730">
    <property type="protein sequence ID" value="AAT92512.1"/>
    <property type="molecule type" value="mRNA"/>
</dbReference>
<dbReference type="EMBL" id="BC091699">
    <property type="protein sequence ID" value="AAH91699.2"/>
    <property type="status" value="ALT_INIT"/>
    <property type="molecule type" value="mRNA"/>
</dbReference>
<dbReference type="PIR" id="A26801">
    <property type="entry name" value="TVRTMC"/>
</dbReference>
<dbReference type="RefSeq" id="NP_036735.2">
    <molecule id="P09416-1"/>
    <property type="nucleotide sequence ID" value="NM_012603.2"/>
</dbReference>
<dbReference type="PDB" id="7LQT">
    <property type="method" value="NMR"/>
    <property type="chains" value="A=27-44"/>
</dbReference>
<dbReference type="PDBsum" id="7LQT"/>
<dbReference type="SMR" id="P09416"/>
<dbReference type="BioGRID" id="246723">
    <property type="interactions" value="4"/>
</dbReference>
<dbReference type="CORUM" id="P09416"/>
<dbReference type="DIP" id="DIP-28140N"/>
<dbReference type="FunCoup" id="P09416">
    <property type="interactions" value="1432"/>
</dbReference>
<dbReference type="IntAct" id="P09416">
    <property type="interactions" value="3"/>
</dbReference>
<dbReference type="MINT" id="P09416"/>
<dbReference type="STRING" id="10116.ENSRNOP00000006188"/>
<dbReference type="ChEMBL" id="CHEMBL4105894"/>
<dbReference type="GlyCosmos" id="P09416">
    <property type="glycosylation" value="1 site, No reported glycans"/>
</dbReference>
<dbReference type="GlyGen" id="P09416">
    <property type="glycosylation" value="1 site"/>
</dbReference>
<dbReference type="iPTMnet" id="P09416"/>
<dbReference type="PhosphoSitePlus" id="P09416"/>
<dbReference type="PaxDb" id="10116-ENSRNOP00000006188"/>
<dbReference type="GeneID" id="24577"/>
<dbReference type="KEGG" id="rno:24577"/>
<dbReference type="UCSC" id="RGD:3130">
    <molecule id="P09416-1"/>
    <property type="organism name" value="rat"/>
</dbReference>
<dbReference type="AGR" id="RGD:3130"/>
<dbReference type="CTD" id="4609"/>
<dbReference type="RGD" id="3130">
    <property type="gene designation" value="Myc"/>
</dbReference>
<dbReference type="VEuPathDB" id="HostDB:ENSRNOG00000004500"/>
<dbReference type="eggNOG" id="KOG2483">
    <property type="taxonomic scope" value="Eukaryota"/>
</dbReference>
<dbReference type="InParanoid" id="P09416"/>
<dbReference type="OrthoDB" id="82738at9989"/>
<dbReference type="PhylomeDB" id="P09416"/>
<dbReference type="Reactome" id="R-RNO-5689880">
    <property type="pathway name" value="Ub-specific processing proteases"/>
</dbReference>
<dbReference type="Reactome" id="R-RNO-8866911">
    <property type="pathway name" value="TFAP2 (AP-2) family regulates transcription of cell cycle factors"/>
</dbReference>
<dbReference type="PRO" id="PR:P09416"/>
<dbReference type="Proteomes" id="UP000002494">
    <property type="component" value="Chromosome 7"/>
</dbReference>
<dbReference type="Bgee" id="ENSRNOG00000004500">
    <property type="expression patterns" value="Expressed in spleen and 19 other cell types or tissues"/>
</dbReference>
<dbReference type="ExpressionAtlas" id="P09416">
    <property type="expression patterns" value="baseline and differential"/>
</dbReference>
<dbReference type="GO" id="GO:0030424">
    <property type="term" value="C:axon"/>
    <property type="evidence" value="ECO:0000266"/>
    <property type="project" value="RGD"/>
</dbReference>
<dbReference type="GO" id="GO:0000785">
    <property type="term" value="C:chromatin"/>
    <property type="evidence" value="ECO:0000266"/>
    <property type="project" value="RGD"/>
</dbReference>
<dbReference type="GO" id="GO:0000791">
    <property type="term" value="C:euchromatin"/>
    <property type="evidence" value="ECO:0000266"/>
    <property type="project" value="RGD"/>
</dbReference>
<dbReference type="GO" id="GO:0005739">
    <property type="term" value="C:mitochondrion"/>
    <property type="evidence" value="ECO:0007669"/>
    <property type="project" value="GOC"/>
</dbReference>
<dbReference type="GO" id="GO:0071943">
    <property type="term" value="C:Myc-Max complex"/>
    <property type="evidence" value="ECO:0000266"/>
    <property type="project" value="RGD"/>
</dbReference>
<dbReference type="GO" id="GO:0016604">
    <property type="term" value="C:nuclear body"/>
    <property type="evidence" value="ECO:0000266"/>
    <property type="project" value="RGD"/>
</dbReference>
<dbReference type="GO" id="GO:0005635">
    <property type="term" value="C:nuclear envelope"/>
    <property type="evidence" value="ECO:0000266"/>
    <property type="project" value="RGD"/>
</dbReference>
<dbReference type="GO" id="GO:0005730">
    <property type="term" value="C:nucleolus"/>
    <property type="evidence" value="ECO:0000250"/>
    <property type="project" value="UniProtKB"/>
</dbReference>
<dbReference type="GO" id="GO:0005654">
    <property type="term" value="C:nucleoplasm"/>
    <property type="evidence" value="ECO:0000250"/>
    <property type="project" value="UniProtKB"/>
</dbReference>
<dbReference type="GO" id="GO:0044195">
    <property type="term" value="C:nucleoplasmic reticulum"/>
    <property type="evidence" value="ECO:0000266"/>
    <property type="project" value="RGD"/>
</dbReference>
<dbReference type="GO" id="GO:0005634">
    <property type="term" value="C:nucleus"/>
    <property type="evidence" value="ECO:0000266"/>
    <property type="project" value="RGD"/>
</dbReference>
<dbReference type="GO" id="GO:0048471">
    <property type="term" value="C:perinuclear region of cytoplasm"/>
    <property type="evidence" value="ECO:0000266"/>
    <property type="project" value="RGD"/>
</dbReference>
<dbReference type="GO" id="GO:0032991">
    <property type="term" value="C:protein-containing complex"/>
    <property type="evidence" value="ECO:0000266"/>
    <property type="project" value="RGD"/>
</dbReference>
<dbReference type="GO" id="GO:0090571">
    <property type="term" value="C:RNA polymerase II transcription repressor complex"/>
    <property type="evidence" value="ECO:0000266"/>
    <property type="project" value="RGD"/>
</dbReference>
<dbReference type="GO" id="GO:0005791">
    <property type="term" value="C:rough endoplasmic reticulum"/>
    <property type="evidence" value="ECO:0000266"/>
    <property type="project" value="RGD"/>
</dbReference>
<dbReference type="GO" id="GO:0005819">
    <property type="term" value="C:spindle"/>
    <property type="evidence" value="ECO:0000266"/>
    <property type="project" value="RGD"/>
</dbReference>
<dbReference type="GO" id="GO:0000987">
    <property type="term" value="F:cis-regulatory region sequence-specific DNA binding"/>
    <property type="evidence" value="ECO:0000266"/>
    <property type="project" value="RGD"/>
</dbReference>
<dbReference type="GO" id="GO:0001046">
    <property type="term" value="F:core promoter sequence-specific DNA binding"/>
    <property type="evidence" value="ECO:0000266"/>
    <property type="project" value="RGD"/>
</dbReference>
<dbReference type="GO" id="GO:0003677">
    <property type="term" value="F:DNA binding"/>
    <property type="evidence" value="ECO:0000314"/>
    <property type="project" value="RGD"/>
</dbReference>
<dbReference type="GO" id="GO:0001228">
    <property type="term" value="F:DNA-binding transcription activator activity, RNA polymerase II-specific"/>
    <property type="evidence" value="ECO:0000266"/>
    <property type="project" value="RGD"/>
</dbReference>
<dbReference type="GO" id="GO:0003700">
    <property type="term" value="F:DNA-binding transcription factor activity"/>
    <property type="evidence" value="ECO:0000314"/>
    <property type="project" value="RGD"/>
</dbReference>
<dbReference type="GO" id="GO:0000981">
    <property type="term" value="F:DNA-binding transcription factor activity, RNA polymerase II-specific"/>
    <property type="evidence" value="ECO:0000250"/>
    <property type="project" value="UniProtKB"/>
</dbReference>
<dbReference type="GO" id="GO:0140297">
    <property type="term" value="F:DNA-binding transcription factor binding"/>
    <property type="evidence" value="ECO:0000266"/>
    <property type="project" value="RGD"/>
</dbReference>
<dbReference type="GO" id="GO:0001227">
    <property type="term" value="F:DNA-binding transcription repressor activity, RNA polymerase II-specific"/>
    <property type="evidence" value="ECO:0000266"/>
    <property type="project" value="RGD"/>
</dbReference>
<dbReference type="GO" id="GO:0003690">
    <property type="term" value="F:double-stranded DNA binding"/>
    <property type="evidence" value="ECO:0000314"/>
    <property type="project" value="RGD"/>
</dbReference>
<dbReference type="GO" id="GO:0070888">
    <property type="term" value="F:E-box binding"/>
    <property type="evidence" value="ECO:0000250"/>
    <property type="project" value="UniProtKB"/>
</dbReference>
<dbReference type="GO" id="GO:0071074">
    <property type="term" value="F:eukaryotic initiation factor eIF2 binding"/>
    <property type="evidence" value="ECO:0000266"/>
    <property type="project" value="RGD"/>
</dbReference>
<dbReference type="GO" id="GO:0042802">
    <property type="term" value="F:identical protein binding"/>
    <property type="evidence" value="ECO:0000266"/>
    <property type="project" value="RGD"/>
</dbReference>
<dbReference type="GO" id="GO:0003729">
    <property type="term" value="F:mRNA binding"/>
    <property type="evidence" value="ECO:0000266"/>
    <property type="project" value="RGD"/>
</dbReference>
<dbReference type="GO" id="GO:0046983">
    <property type="term" value="F:protein dimerization activity"/>
    <property type="evidence" value="ECO:0007669"/>
    <property type="project" value="InterPro"/>
</dbReference>
<dbReference type="GO" id="GO:0044877">
    <property type="term" value="F:protein-containing complex binding"/>
    <property type="evidence" value="ECO:0000353"/>
    <property type="project" value="RGD"/>
</dbReference>
<dbReference type="GO" id="GO:0000978">
    <property type="term" value="F:RNA polymerase II cis-regulatory region sequence-specific DNA binding"/>
    <property type="evidence" value="ECO:0000266"/>
    <property type="project" value="RGD"/>
</dbReference>
<dbReference type="GO" id="GO:1905761">
    <property type="term" value="F:SCF ubiquitin ligase complex binding"/>
    <property type="evidence" value="ECO:0000266"/>
    <property type="project" value="RGD"/>
</dbReference>
<dbReference type="GO" id="GO:0043565">
    <property type="term" value="F:sequence-specific DNA binding"/>
    <property type="evidence" value="ECO:0000314"/>
    <property type="project" value="RGD"/>
</dbReference>
<dbReference type="GO" id="GO:0001221">
    <property type="term" value="F:transcription coregulator binding"/>
    <property type="evidence" value="ECO:0000266"/>
    <property type="project" value="RGD"/>
</dbReference>
<dbReference type="GO" id="GO:0140537">
    <property type="term" value="F:transcription regulator activator activity"/>
    <property type="evidence" value="ECO:0000266"/>
    <property type="project" value="RGD"/>
</dbReference>
<dbReference type="GO" id="GO:0031625">
    <property type="term" value="F:ubiquitin protein ligase binding"/>
    <property type="evidence" value="ECO:0000266"/>
    <property type="project" value="RGD"/>
</dbReference>
<dbReference type="GO" id="GO:1990863">
    <property type="term" value="P:acinar cell proliferation"/>
    <property type="evidence" value="ECO:0000266"/>
    <property type="project" value="RGD"/>
</dbReference>
<dbReference type="GO" id="GO:0006865">
    <property type="term" value="P:amino acid transport"/>
    <property type="evidence" value="ECO:0000315"/>
    <property type="project" value="RGD"/>
</dbReference>
<dbReference type="GO" id="GO:0001783">
    <property type="term" value="P:B cell apoptotic process"/>
    <property type="evidence" value="ECO:0000266"/>
    <property type="project" value="RGD"/>
</dbReference>
<dbReference type="GO" id="GO:0001658">
    <property type="term" value="P:branching involved in ureteric bud morphogenesis"/>
    <property type="evidence" value="ECO:0000250"/>
    <property type="project" value="UniProtKB"/>
</dbReference>
<dbReference type="GO" id="GO:0008283">
    <property type="term" value="P:cell population proliferation"/>
    <property type="evidence" value="ECO:0000266"/>
    <property type="project" value="RGD"/>
</dbReference>
<dbReference type="GO" id="GO:1904385">
    <property type="term" value="P:cellular response to angiotensin"/>
    <property type="evidence" value="ECO:0000270"/>
    <property type="project" value="RGD"/>
</dbReference>
<dbReference type="GO" id="GO:1903841">
    <property type="term" value="P:cellular response to arsenite(3-)"/>
    <property type="evidence" value="ECO:0000270"/>
    <property type="project" value="RGD"/>
</dbReference>
<dbReference type="GO" id="GO:0071322">
    <property type="term" value="P:cellular response to carbohydrate stimulus"/>
    <property type="evidence" value="ECO:0000270"/>
    <property type="project" value="RGD"/>
</dbReference>
<dbReference type="GO" id="GO:0071409">
    <property type="term" value="P:cellular response to cycloheximide"/>
    <property type="evidence" value="ECO:0000270"/>
    <property type="project" value="RGD"/>
</dbReference>
<dbReference type="GO" id="GO:0071345">
    <property type="term" value="P:cellular response to cytokine stimulus"/>
    <property type="evidence" value="ECO:0000270"/>
    <property type="project" value="RGD"/>
</dbReference>
<dbReference type="GO" id="GO:1904620">
    <property type="term" value="P:cellular response to dimethyl sulfoxide"/>
    <property type="evidence" value="ECO:0000270"/>
    <property type="project" value="RGD"/>
</dbReference>
<dbReference type="GO" id="GO:1990859">
    <property type="term" value="P:cellular response to endothelin"/>
    <property type="evidence" value="ECO:0000270"/>
    <property type="project" value="RGD"/>
</dbReference>
<dbReference type="GO" id="GO:0071364">
    <property type="term" value="P:cellular response to epidermal growth factor stimulus"/>
    <property type="evidence" value="ECO:0000270"/>
    <property type="project" value="RGD"/>
</dbReference>
<dbReference type="GO" id="GO:0071391">
    <property type="term" value="P:cellular response to estrogen stimulus"/>
    <property type="evidence" value="ECO:0000270"/>
    <property type="project" value="RGD"/>
</dbReference>
<dbReference type="GO" id="GO:0044344">
    <property type="term" value="P:cellular response to fibroblast growth factor stimulus"/>
    <property type="evidence" value="ECO:0000270"/>
    <property type="project" value="RGD"/>
</dbReference>
<dbReference type="GO" id="GO:0071378">
    <property type="term" value="P:cellular response to growth hormone stimulus"/>
    <property type="evidence" value="ECO:0000270"/>
    <property type="project" value="RGD"/>
</dbReference>
<dbReference type="GO" id="GO:0071464">
    <property type="term" value="P:cellular response to hydrostatic pressure"/>
    <property type="evidence" value="ECO:0000270"/>
    <property type="project" value="RGD"/>
</dbReference>
<dbReference type="GO" id="GO:0071456">
    <property type="term" value="P:cellular response to hypoxia"/>
    <property type="evidence" value="ECO:0000266"/>
    <property type="project" value="RGD"/>
</dbReference>
<dbReference type="GO" id="GO:0032869">
    <property type="term" value="P:cellular response to insulin stimulus"/>
    <property type="evidence" value="ECO:0000270"/>
    <property type="project" value="RGD"/>
</dbReference>
<dbReference type="GO" id="GO:0035457">
    <property type="term" value="P:cellular response to interferon-alpha"/>
    <property type="evidence" value="ECO:0000266"/>
    <property type="project" value="RGD"/>
</dbReference>
<dbReference type="GO" id="GO:0071347">
    <property type="term" value="P:cellular response to interleukin-1"/>
    <property type="evidence" value="ECO:0000270"/>
    <property type="project" value="RGD"/>
</dbReference>
<dbReference type="GO" id="GO:1990858">
    <property type="term" value="P:cellular response to lectin"/>
    <property type="evidence" value="ECO:0000270"/>
    <property type="project" value="RGD"/>
</dbReference>
<dbReference type="GO" id="GO:1904628">
    <property type="term" value="P:cellular response to phorbol 13-acetate 12-myristate"/>
    <property type="evidence" value="ECO:0000270"/>
    <property type="project" value="RGD"/>
</dbReference>
<dbReference type="GO" id="GO:0036120">
    <property type="term" value="P:cellular response to platelet-derived growth factor stimulus"/>
    <property type="evidence" value="ECO:0000270"/>
    <property type="project" value="RGD"/>
</dbReference>
<dbReference type="GO" id="GO:1990646">
    <property type="term" value="P:cellular response to prolactin"/>
    <property type="evidence" value="ECO:0000270"/>
    <property type="project" value="RGD"/>
</dbReference>
<dbReference type="GO" id="GO:1904586">
    <property type="term" value="P:cellular response to putrescine"/>
    <property type="evidence" value="ECO:0000270"/>
    <property type="project" value="RGD"/>
</dbReference>
<dbReference type="GO" id="GO:0071300">
    <property type="term" value="P:cellular response to retinoic acid"/>
    <property type="evidence" value="ECO:0000270"/>
    <property type="project" value="RGD"/>
</dbReference>
<dbReference type="GO" id="GO:0071394">
    <property type="term" value="P:cellular response to testosterone stimulus"/>
    <property type="evidence" value="ECO:0000270"/>
    <property type="project" value="RGD"/>
</dbReference>
<dbReference type="GO" id="GO:0071346">
    <property type="term" value="P:cellular response to type II interferon"/>
    <property type="evidence" value="ECO:0000270"/>
    <property type="project" value="RGD"/>
</dbReference>
<dbReference type="GO" id="GO:0034644">
    <property type="term" value="P:cellular response to UV"/>
    <property type="evidence" value="ECO:0000266"/>
    <property type="project" value="RGD"/>
</dbReference>
<dbReference type="GO" id="GO:0071466">
    <property type="term" value="P:cellular response to xenobiotic stimulus"/>
    <property type="evidence" value="ECO:0000270"/>
    <property type="project" value="RGD"/>
</dbReference>
<dbReference type="GO" id="GO:0006338">
    <property type="term" value="P:chromatin remodeling"/>
    <property type="evidence" value="ECO:0000250"/>
    <property type="project" value="UniProtKB"/>
</dbReference>
<dbReference type="GO" id="GO:0051276">
    <property type="term" value="P:chromosome organization"/>
    <property type="evidence" value="ECO:0000250"/>
    <property type="project" value="UniProtKB"/>
</dbReference>
<dbReference type="GO" id="GO:0050910">
    <property type="term" value="P:detection of mechanical stimulus involved in sensory perception of sound"/>
    <property type="evidence" value="ECO:0000266"/>
    <property type="project" value="RGD"/>
</dbReference>
<dbReference type="GO" id="GO:0006974">
    <property type="term" value="P:DNA damage response"/>
    <property type="evidence" value="ECO:0000250"/>
    <property type="project" value="UniProtKB"/>
</dbReference>
<dbReference type="GO" id="GO:0006351">
    <property type="term" value="P:DNA-templated transcription"/>
    <property type="evidence" value="ECO:0000314"/>
    <property type="project" value="RGD"/>
</dbReference>
<dbReference type="GO" id="GO:0006352">
    <property type="term" value="P:DNA-templated transcription initiation"/>
    <property type="evidence" value="ECO:0000314"/>
    <property type="project" value="RGD"/>
</dbReference>
<dbReference type="GO" id="GO:0070371">
    <property type="term" value="P:ERK1 and ERK2 cascade"/>
    <property type="evidence" value="ECO:0000266"/>
    <property type="project" value="RGD"/>
</dbReference>
<dbReference type="GO" id="GO:0045023">
    <property type="term" value="P:G0 to G1 transition"/>
    <property type="evidence" value="ECO:0000270"/>
    <property type="project" value="RGD"/>
</dbReference>
<dbReference type="GO" id="GO:0000082">
    <property type="term" value="P:G1/S transition of mitotic cell cycle"/>
    <property type="evidence" value="ECO:0000250"/>
    <property type="project" value="UniProtKB"/>
</dbReference>
<dbReference type="GO" id="GO:0006006">
    <property type="term" value="P:glucose metabolic process"/>
    <property type="evidence" value="ECO:0000315"/>
    <property type="project" value="RGD"/>
</dbReference>
<dbReference type="GO" id="GO:0021854">
    <property type="term" value="P:hypothalamus development"/>
    <property type="evidence" value="ECO:0000270"/>
    <property type="project" value="RGD"/>
</dbReference>
<dbReference type="GO" id="GO:0001701">
    <property type="term" value="P:in utero embryonic development"/>
    <property type="evidence" value="ECO:0000270"/>
    <property type="project" value="RGD"/>
</dbReference>
<dbReference type="GO" id="GO:0007007">
    <property type="term" value="P:inner mitochondrial membrane organization"/>
    <property type="evidence" value="ECO:0000315"/>
    <property type="project" value="RGD"/>
</dbReference>
<dbReference type="GO" id="GO:0006879">
    <property type="term" value="P:intracellular iron ion homeostasis"/>
    <property type="evidence" value="ECO:0000250"/>
    <property type="project" value="UniProtKB"/>
</dbReference>
<dbReference type="GO" id="GO:0008630">
    <property type="term" value="P:intrinsic apoptotic signaling pathway in response to DNA damage"/>
    <property type="evidence" value="ECO:0000266"/>
    <property type="project" value="RGD"/>
</dbReference>
<dbReference type="GO" id="GO:0046722">
    <property type="term" value="P:lactic acid secretion"/>
    <property type="evidence" value="ECO:0000315"/>
    <property type="project" value="RGD"/>
</dbReference>
<dbReference type="GO" id="GO:0097421">
    <property type="term" value="P:liver regeneration"/>
    <property type="evidence" value="ECO:0000270"/>
    <property type="project" value="RGD"/>
</dbReference>
<dbReference type="GO" id="GO:0000165">
    <property type="term" value="P:MAPK cascade"/>
    <property type="evidence" value="ECO:0000250"/>
    <property type="project" value="UniProtKB"/>
</dbReference>
<dbReference type="GO" id="GO:0042474">
    <property type="term" value="P:middle ear morphogenesis"/>
    <property type="evidence" value="ECO:0000266"/>
    <property type="project" value="RGD"/>
</dbReference>
<dbReference type="GO" id="GO:0051450">
    <property type="term" value="P:myoblast proliferation"/>
    <property type="evidence" value="ECO:0000270"/>
    <property type="project" value="RGD"/>
</dbReference>
<dbReference type="GO" id="GO:0014902">
    <property type="term" value="P:myotube differentiation"/>
    <property type="evidence" value="ECO:0000266"/>
    <property type="project" value="RGD"/>
</dbReference>
<dbReference type="GO" id="GO:0043066">
    <property type="term" value="P:negative regulation of apoptotic process"/>
    <property type="evidence" value="ECO:0000266"/>
    <property type="project" value="RGD"/>
</dbReference>
<dbReference type="GO" id="GO:0051782">
    <property type="term" value="P:negative regulation of cell division"/>
    <property type="evidence" value="ECO:0000250"/>
    <property type="project" value="UniProtKB"/>
</dbReference>
<dbReference type="GO" id="GO:0046325">
    <property type="term" value="P:negative regulation of D-glucose import"/>
    <property type="evidence" value="ECO:0000315"/>
    <property type="project" value="RGD"/>
</dbReference>
<dbReference type="GO" id="GO:1904036">
    <property type="term" value="P:negative regulation of epithelial cell apoptotic process"/>
    <property type="evidence" value="ECO:0000315"/>
    <property type="project" value="RGD"/>
</dbReference>
<dbReference type="GO" id="GO:0048147">
    <property type="term" value="P:negative regulation of fibroblast proliferation"/>
    <property type="evidence" value="ECO:0000266"/>
    <property type="project" value="RGD"/>
</dbReference>
<dbReference type="GO" id="GO:0010629">
    <property type="term" value="P:negative regulation of gene expression"/>
    <property type="evidence" value="ECO:0000315"/>
    <property type="project" value="RGD"/>
</dbReference>
<dbReference type="GO" id="GO:0044027">
    <property type="term" value="P:negative regulation of gene expression via chromosomal CpG island methylation"/>
    <property type="evidence" value="ECO:0000266"/>
    <property type="project" value="RGD"/>
</dbReference>
<dbReference type="GO" id="GO:0045656">
    <property type="term" value="P:negative regulation of monocyte differentiation"/>
    <property type="evidence" value="ECO:0000250"/>
    <property type="project" value="UniProtKB"/>
</dbReference>
<dbReference type="GO" id="GO:0032873">
    <property type="term" value="P:negative regulation of stress-activated MAPK cascade"/>
    <property type="evidence" value="ECO:0000266"/>
    <property type="project" value="RGD"/>
</dbReference>
<dbReference type="GO" id="GO:0000122">
    <property type="term" value="P:negative regulation of transcription by RNA polymerase II"/>
    <property type="evidence" value="ECO:0000315"/>
    <property type="project" value="UniProtKB"/>
</dbReference>
<dbReference type="GO" id="GO:0060633">
    <property type="term" value="P:negative regulation of transcription initiation by RNA polymerase II"/>
    <property type="evidence" value="ECO:0000266"/>
    <property type="project" value="RGD"/>
</dbReference>
<dbReference type="GO" id="GO:0001866">
    <property type="term" value="P:NK T cell proliferation"/>
    <property type="evidence" value="ECO:0000266"/>
    <property type="project" value="RGD"/>
</dbReference>
<dbReference type="GO" id="GO:0001541">
    <property type="term" value="P:ovarian follicle development"/>
    <property type="evidence" value="ECO:0000270"/>
    <property type="project" value="RGD"/>
</dbReference>
<dbReference type="GO" id="GO:0043473">
    <property type="term" value="P:pigmentation"/>
    <property type="evidence" value="ECO:0000266"/>
    <property type="project" value="RGD"/>
</dbReference>
<dbReference type="GO" id="GO:1904699">
    <property type="term" value="P:positive regulation of acinar cell proliferation"/>
    <property type="evidence" value="ECO:0000266"/>
    <property type="project" value="RGD"/>
</dbReference>
<dbReference type="GO" id="GO:2001235">
    <property type="term" value="P:positive regulation of apoptotic signaling pathway"/>
    <property type="evidence" value="ECO:0000266"/>
    <property type="project" value="RGD"/>
</dbReference>
<dbReference type="GO" id="GO:2001171">
    <property type="term" value="P:positive regulation of ATP biosynthetic process"/>
    <property type="evidence" value="ECO:0000315"/>
    <property type="project" value="RGD"/>
</dbReference>
<dbReference type="GO" id="GO:0002904">
    <property type="term" value="P:positive regulation of B cell apoptotic process"/>
    <property type="evidence" value="ECO:0000266"/>
    <property type="project" value="RGD"/>
</dbReference>
<dbReference type="GO" id="GO:0045787">
    <property type="term" value="P:positive regulation of cell cycle"/>
    <property type="evidence" value="ECO:0000315"/>
    <property type="project" value="RGD"/>
</dbReference>
<dbReference type="GO" id="GO:0008284">
    <property type="term" value="P:positive regulation of cell population proliferation"/>
    <property type="evidence" value="ECO:0000316"/>
    <property type="project" value="RGD"/>
</dbReference>
<dbReference type="GO" id="GO:1901857">
    <property type="term" value="P:positive regulation of cellular respiration"/>
    <property type="evidence" value="ECO:0000315"/>
    <property type="project" value="RGD"/>
</dbReference>
<dbReference type="GO" id="GO:0045893">
    <property type="term" value="P:positive regulation of DNA-templated transcription"/>
    <property type="evidence" value="ECO:0000314"/>
    <property type="project" value="UniProtKB"/>
</dbReference>
<dbReference type="GO" id="GO:0050679">
    <property type="term" value="P:positive regulation of epithelial cell proliferation"/>
    <property type="evidence" value="ECO:0000250"/>
    <property type="project" value="UniProtKB"/>
</dbReference>
<dbReference type="GO" id="GO:0048146">
    <property type="term" value="P:positive regulation of fibroblast proliferation"/>
    <property type="evidence" value="ECO:0000315"/>
    <property type="project" value="RGD"/>
</dbReference>
<dbReference type="GO" id="GO:0010628">
    <property type="term" value="P:positive regulation of gene expression"/>
    <property type="evidence" value="ECO:0000266"/>
    <property type="project" value="RGD"/>
</dbReference>
<dbReference type="GO" id="GO:0060252">
    <property type="term" value="P:positive regulation of glial cell proliferation"/>
    <property type="evidence" value="ECO:0000315"/>
    <property type="project" value="RGD"/>
</dbReference>
<dbReference type="GO" id="GO:0045821">
    <property type="term" value="P:positive regulation of glycolytic process"/>
    <property type="evidence" value="ECO:0000315"/>
    <property type="project" value="RGD"/>
</dbReference>
<dbReference type="GO" id="GO:1902255">
    <property type="term" value="P:positive regulation of intrinsic apoptotic signaling pathway by p53 class mediator"/>
    <property type="evidence" value="ECO:0000266"/>
    <property type="project" value="RGD"/>
</dbReference>
<dbReference type="GO" id="GO:0002053">
    <property type="term" value="P:positive regulation of mesenchymal cell proliferation"/>
    <property type="evidence" value="ECO:0000250"/>
    <property type="project" value="UniProtKB"/>
</dbReference>
<dbReference type="GO" id="GO:0090096">
    <property type="term" value="P:positive regulation of metanephric cap mesenchymal cell proliferation"/>
    <property type="evidence" value="ECO:0000250"/>
    <property type="project" value="UniProtKB"/>
</dbReference>
<dbReference type="GO" id="GO:1902895">
    <property type="term" value="P:positive regulation of miRNA transcription"/>
    <property type="evidence" value="ECO:0000266"/>
    <property type="project" value="RGD"/>
</dbReference>
<dbReference type="GO" id="GO:0010918">
    <property type="term" value="P:positive regulation of mitochondrial membrane potential"/>
    <property type="evidence" value="ECO:0000315"/>
    <property type="project" value="RGD"/>
</dbReference>
<dbReference type="GO" id="GO:1903862">
    <property type="term" value="P:positive regulation of oxidative phosphorylation"/>
    <property type="evidence" value="ECO:0000315"/>
    <property type="project" value="RGD"/>
</dbReference>
<dbReference type="GO" id="GO:0014911">
    <property type="term" value="P:positive regulation of smooth muscle cell migration"/>
    <property type="evidence" value="ECO:0000315"/>
    <property type="project" value="RGD"/>
</dbReference>
<dbReference type="GO" id="GO:0048661">
    <property type="term" value="P:positive regulation of smooth muscle cell proliferation"/>
    <property type="evidence" value="ECO:0000315"/>
    <property type="project" value="RGD"/>
</dbReference>
<dbReference type="GO" id="GO:0032206">
    <property type="term" value="P:positive regulation of telomere maintenance"/>
    <property type="evidence" value="ECO:0000266"/>
    <property type="project" value="RGD"/>
</dbReference>
<dbReference type="GO" id="GO:0045944">
    <property type="term" value="P:positive regulation of transcription by RNA polymerase II"/>
    <property type="evidence" value="ECO:0000315"/>
    <property type="project" value="RGD"/>
</dbReference>
<dbReference type="GO" id="GO:0060261">
    <property type="term" value="P:positive regulation of transcription initiation by RNA polymerase II"/>
    <property type="evidence" value="ECO:0000266"/>
    <property type="project" value="RGD"/>
</dbReference>
<dbReference type="GO" id="GO:0016485">
    <property type="term" value="P:protein processing"/>
    <property type="evidence" value="ECO:0000266"/>
    <property type="project" value="RGD"/>
</dbReference>
<dbReference type="GO" id="GO:0032986">
    <property type="term" value="P:protein-DNA complex disassembly"/>
    <property type="evidence" value="ECO:0000266"/>
    <property type="project" value="RGD"/>
</dbReference>
<dbReference type="GO" id="GO:0006848">
    <property type="term" value="P:pyruvate transport"/>
    <property type="evidence" value="ECO:0000315"/>
    <property type="project" value="RGD"/>
</dbReference>
<dbReference type="GO" id="GO:0000320">
    <property type="term" value="P:re-entry into mitotic cell cycle"/>
    <property type="evidence" value="ECO:0000315"/>
    <property type="project" value="RGD"/>
</dbReference>
<dbReference type="GO" id="GO:0042981">
    <property type="term" value="P:regulation of apoptotic process"/>
    <property type="evidence" value="ECO:0000266"/>
    <property type="project" value="RGD"/>
</dbReference>
<dbReference type="GO" id="GO:0010564">
    <property type="term" value="P:regulation of cell cycle process"/>
    <property type="evidence" value="ECO:0000266"/>
    <property type="project" value="RGD"/>
</dbReference>
<dbReference type="GO" id="GO:0006355">
    <property type="term" value="P:regulation of DNA-templated transcription"/>
    <property type="evidence" value="ECO:0000314"/>
    <property type="project" value="RGD"/>
</dbReference>
<dbReference type="GO" id="GO:0010468">
    <property type="term" value="P:regulation of gene expression"/>
    <property type="evidence" value="ECO:0000266"/>
    <property type="project" value="RGD"/>
</dbReference>
<dbReference type="GO" id="GO:0007346">
    <property type="term" value="P:regulation of mitotic cell cycle"/>
    <property type="evidence" value="ECO:0000315"/>
    <property type="project" value="RGD"/>
</dbReference>
<dbReference type="GO" id="GO:0002082">
    <property type="term" value="P:regulation of oxidative phosphorylation"/>
    <property type="evidence" value="ECO:0000315"/>
    <property type="project" value="RGD"/>
</dbReference>
<dbReference type="GO" id="GO:1904672">
    <property type="term" value="P:regulation of somatic stem cell population maintenance"/>
    <property type="evidence" value="ECO:0000250"/>
    <property type="project" value="UniProtKB"/>
</dbReference>
<dbReference type="GO" id="GO:0032204">
    <property type="term" value="P:regulation of telomere maintenance"/>
    <property type="evidence" value="ECO:0000250"/>
    <property type="project" value="UniProtKB"/>
</dbReference>
<dbReference type="GO" id="GO:0006357">
    <property type="term" value="P:regulation of transcription by RNA polymerase II"/>
    <property type="evidence" value="ECO:0000318"/>
    <property type="project" value="GO_Central"/>
</dbReference>
<dbReference type="GO" id="GO:0043279">
    <property type="term" value="P:response to alkaloid"/>
    <property type="evidence" value="ECO:0000266"/>
    <property type="project" value="RGD"/>
</dbReference>
<dbReference type="GO" id="GO:0032355">
    <property type="term" value="P:response to estradiol"/>
    <property type="evidence" value="ECO:0000270"/>
    <property type="project" value="RGD"/>
</dbReference>
<dbReference type="GO" id="GO:0045471">
    <property type="term" value="P:response to ethanol"/>
    <property type="evidence" value="ECO:0000270"/>
    <property type="project" value="RGD"/>
</dbReference>
<dbReference type="GO" id="GO:0044752">
    <property type="term" value="P:response to human chorionic gonadotropin"/>
    <property type="evidence" value="ECO:0000270"/>
    <property type="project" value="RGD"/>
</dbReference>
<dbReference type="GO" id="GO:0009314">
    <property type="term" value="P:response to radiation"/>
    <property type="evidence" value="ECO:0000266"/>
    <property type="project" value="RGD"/>
</dbReference>
<dbReference type="GO" id="GO:0009410">
    <property type="term" value="P:response to xenobiotic stimulus"/>
    <property type="evidence" value="ECO:0000266"/>
    <property type="project" value="RGD"/>
</dbReference>
<dbReference type="GO" id="GO:0016072">
    <property type="term" value="P:rRNA metabolic process"/>
    <property type="evidence" value="ECO:0000250"/>
    <property type="project" value="UniProtKB"/>
</dbReference>
<dbReference type="GO" id="GO:0035914">
    <property type="term" value="P:skeletal muscle cell differentiation"/>
    <property type="evidence" value="ECO:0000266"/>
    <property type="project" value="RGD"/>
</dbReference>
<dbReference type="GO" id="GO:0048705">
    <property type="term" value="P:skeletal system morphogenesis"/>
    <property type="evidence" value="ECO:0000266"/>
    <property type="project" value="RGD"/>
</dbReference>
<dbReference type="GO" id="GO:0006366">
    <property type="term" value="P:transcription by RNA polymerase II"/>
    <property type="evidence" value="ECO:0000314"/>
    <property type="project" value="RGD"/>
</dbReference>
<dbReference type="GO" id="GO:0016055">
    <property type="term" value="P:Wnt signaling pathway"/>
    <property type="evidence" value="ECO:0000266"/>
    <property type="project" value="RGD"/>
</dbReference>
<dbReference type="CDD" id="cd11458">
    <property type="entry name" value="bHLHzip_c-Myc"/>
    <property type="match status" value="1"/>
</dbReference>
<dbReference type="FunFam" id="4.10.280.10:FF:000019">
    <property type="entry name" value="Myc proto-oncogene protein"/>
    <property type="match status" value="1"/>
</dbReference>
<dbReference type="Gene3D" id="4.10.280.10">
    <property type="entry name" value="Helix-loop-helix DNA-binding domain"/>
    <property type="match status" value="1"/>
</dbReference>
<dbReference type="InterPro" id="IPR011598">
    <property type="entry name" value="bHLH_dom"/>
</dbReference>
<dbReference type="InterPro" id="IPR036638">
    <property type="entry name" value="HLH_DNA-bd_sf"/>
</dbReference>
<dbReference type="InterPro" id="IPR003327">
    <property type="entry name" value="Myc-LZ"/>
</dbReference>
<dbReference type="InterPro" id="IPR050433">
    <property type="entry name" value="Myc_transcription_factors"/>
</dbReference>
<dbReference type="InterPro" id="IPR002418">
    <property type="entry name" value="Tscrpt_reg_Myc"/>
</dbReference>
<dbReference type="InterPro" id="IPR012682">
    <property type="entry name" value="Tscrpt_reg_Myc_N"/>
</dbReference>
<dbReference type="PANTHER" id="PTHR45851">
    <property type="entry name" value="MYC PROTO-ONCOGENE"/>
    <property type="match status" value="1"/>
</dbReference>
<dbReference type="Pfam" id="PF00010">
    <property type="entry name" value="HLH"/>
    <property type="match status" value="1"/>
</dbReference>
<dbReference type="Pfam" id="PF02344">
    <property type="entry name" value="Myc-LZ"/>
    <property type="match status" value="1"/>
</dbReference>
<dbReference type="Pfam" id="PF01056">
    <property type="entry name" value="Myc_N"/>
    <property type="match status" value="1"/>
</dbReference>
<dbReference type="PIRSF" id="PIRSF001705">
    <property type="entry name" value="Myc_protein"/>
    <property type="match status" value="1"/>
</dbReference>
<dbReference type="PRINTS" id="PR00044">
    <property type="entry name" value="LEUZIPPRMYC"/>
</dbReference>
<dbReference type="SMART" id="SM00353">
    <property type="entry name" value="HLH"/>
    <property type="match status" value="1"/>
</dbReference>
<dbReference type="SUPFAM" id="SSF47459">
    <property type="entry name" value="HLH, helix-loop-helix DNA-binding domain"/>
    <property type="match status" value="1"/>
</dbReference>
<dbReference type="PROSITE" id="PS50888">
    <property type="entry name" value="BHLH"/>
    <property type="match status" value="1"/>
</dbReference>
<comment type="function">
    <text evidence="2 3 6">Transcription factor that binds DNA in a non-specific manner, yet also specifically recognizes the core sequence 5'-CAC[GA]TG-3'. Activates the transcription of growth-related genes (PubMed:17304222). Binds to the VEGFA promoter, promoting VEGFA production and subsequent sprouting angiogenesis (By similarity). Regulator of somatic reprogramming, controls self-renewal of embryonic stem cells. Functions with TAF6L to activate target gene expression through RNA polymerase II pause release (By similarity). Positively regulates transcription of HNRNPA1, HNRNPA2 and PTBP1 which in turn regulate splicing of pyruvate kinase PKM by binding repressively to sequences flanking PKM exon 9, inhibiting exon 9 inclusion and resulting in exon 10 inclusion and production of the PKM M2 isoform (By similarity).</text>
</comment>
<comment type="subunit">
    <text evidence="2 3 6">Efficient DNA binding requires dimerization with another bHLH protein. Binds DNA as a heterodimer with MAX (By similarity). Interacts with TAF1C and SPAG9. Interacts with PARP10. Interacts with KDM5A and KDM5B. Interacts (when phosphorylated at Thr-72 and Ser-76) with FBXW7. Interacts with PIM2. Interacts with RIOX1 (By similarity). The heterodimer MYC:MAX interacts with ABI1; the interaction may enhance MYC:MAX transcriptional activity (PubMed:17304222). Interacts with TRIM6 (By similarity). Interacts with NPM1; the binary complex is recruited to the promoter of MYC target genes and enhances their transcription (By similarity). Interacts with CIP2A; leading to the stabilization of MYC (By similarity). Interacts with NUP205 (By similarity). Interacts with HEATR1; the interaction is required for localization of MYC to the nucleolus (By similarity).</text>
</comment>
<comment type="subcellular location">
    <subcellularLocation>
        <location evidence="2">Nucleus</location>
        <location evidence="2">Nucleoplasm</location>
    </subcellularLocation>
    <subcellularLocation>
        <location evidence="2">Nucleus</location>
        <location evidence="2">Nucleolus</location>
    </subcellularLocation>
    <subcellularLocation>
        <location evidence="2">Nucleus</location>
    </subcellularLocation>
    <subcellularLocation>
        <location evidence="2">Cytoplasm</location>
    </subcellularLocation>
    <subcellularLocation>
        <location evidence="2">Chromosome</location>
    </subcellularLocation>
    <text evidence="2">Association with chromatin is reduced by hyperphosphorylation. Localization to the nucleolus is dependent on HEATR1.</text>
</comment>
<comment type="alternative products">
    <event type="alternative initiation"/>
    <isoform>
        <id>P09416-1</id>
        <name>2</name>
        <name evidence="8">c-myc 1</name>
        <sequence type="displayed"/>
    </isoform>
    <isoform>
        <id>P09416-2</id>
        <name>1</name>
        <name evidence="8">c-myc 2</name>
        <sequence type="described" ref="VSP_061785"/>
    </isoform>
</comment>
<comment type="domain">
    <text evidence="2">The 9aaTAD motif is a transactivation domain present in a large number of yeast and animal transcription factors.</text>
</comment>
<comment type="PTM">
    <text evidence="2 3">Phosphorylated by PRKDC (By similarity). Phosphorylation at Ser-343 by PIM2 leads to the stabilization of MYC (By similarity). Phosphorylation at Ser-76 by CDK2 prevents Ras-induced senescence. Phosphorylated at Ser-76 by DYRK2; this primes the protein for subsequent phosphorylation by GSK3B at Thr-72. Phosphorylation at Thr-72 and Ser-76 by GSK3 is required for ubiquitination and degradation by the proteasome. Dephosphorylation at multiple sites by the PNUTS-PP1 complex promotes MYC stability by preventing ubiquitination by the SCF(FBXW7) complex. Dephosphorylation at Ser-76 by protein phosphatase 2A (PPP2CA) promotes its degradation; interaction with PPP2CA is enhanced by AMBRA1 (By similarity).</text>
</comment>
<comment type="PTM">
    <text evidence="2 3">Ubiquitinated by the SCF(FBXW7) complex when phosphorylated at Thr-72 and Ser-76, leading to its degradation by the proteasome. Ubiquitination is counteracted by USP28 in the nucleoplasm and USP36 in the nucleolus, both interacting with of FBXW7, leading to its deubiquitination and preventing degradation. Also polyubiquitinated by the DCX(TRPC4AP) complex. Ubiquitinated by UBR5 when not forming a heterodimer with another bHLH protein, leading to its degradation: UBR5 recognizes and binds a degron that is only available upon heterodimer dissociation (By similarity). Ubiquitinated by TRIM6 in a phosphorylation-independent manner.</text>
</comment>
<comment type="biotechnology">
    <text evidence="7">POU5F1/OCT4, SOX2, MYC/c-Myc and KLF4 are the four Yamanaka factors. When combined, these factors are sufficient to reprogram differentiated cells to an embryonic-like state designated iPS (induced pluripotent stem) cells. iPS cells exhibit the morphology and growth properties of ES cells and express ES cell marker genes.</text>
</comment>
<comment type="miscellaneous">
    <text evidence="10">Alternative translation initiation from an upstream, in-frame non-ATG (CTG) codon or a downstream ATG start site results in the production of 2 isoforms with distinct N-termini, shown in this entry as isoform 2 and isoform 1, respectively.</text>
</comment>
<comment type="miscellaneous">
    <molecule>Isoform 2</molecule>
    <text evidence="9 10">Produced by alternative translation initiation from a CTG codon, which is translated as Met.</text>
</comment>
<comment type="sequence caution" evidence="9">
    <conflict type="erroneous initiation">
        <sequence resource="EMBL-CDS" id="AAH91699"/>
    </conflict>
    <text>Extended N-terminus.</text>
</comment>
<proteinExistence type="evidence at protein level"/>
<evidence type="ECO:0000250" key="1"/>
<evidence type="ECO:0000250" key="2">
    <source>
        <dbReference type="UniProtKB" id="P01106"/>
    </source>
</evidence>
<evidence type="ECO:0000250" key="3">
    <source>
        <dbReference type="UniProtKB" id="P01108"/>
    </source>
</evidence>
<evidence type="ECO:0000255" key="4">
    <source>
        <dbReference type="PROSITE-ProRule" id="PRU00981"/>
    </source>
</evidence>
<evidence type="ECO:0000256" key="5">
    <source>
        <dbReference type="SAM" id="MobiDB-lite"/>
    </source>
</evidence>
<evidence type="ECO:0000269" key="6">
    <source>
    </source>
</evidence>
<evidence type="ECO:0000269" key="7">
    <source>
    </source>
</evidence>
<evidence type="ECO:0000303" key="8">
    <source>
    </source>
</evidence>
<evidence type="ECO:0000305" key="9"/>
<evidence type="ECO:0000305" key="10">
    <source>
    </source>
</evidence>
<evidence type="ECO:0007744" key="11">
    <source>
        <dbReference type="PDB" id="7LQT"/>
    </source>
</evidence>
<evidence type="ECO:0007829" key="12">
    <source>
        <dbReference type="PDB" id="7LQT"/>
    </source>
</evidence>
<gene>
    <name type="primary">Myc</name>
</gene>
<protein>
    <recommendedName>
        <fullName>Myc proto-oncogene protein</fullName>
    </recommendedName>
    <alternativeName>
        <fullName>Proto-oncogene c-Myc</fullName>
    </alternativeName>
    <alternativeName>
        <fullName>Transcription factor p64</fullName>
    </alternativeName>
</protein>
<sequence length="453" mass="50561">MNFLWEVENPTVTTMPLNVSFANRNYDLDYDSVQPYFICDEEENFYHQQQQSELQPPAPSEDIWKKFELLPTPPLSPSRRSGLCSPSYVAVATSFSPREDDDGGGGNFSTADQLEMMTELLGGDMVNQSFICDPDDETFIKNIIIQDCMWSGFSAAAKLVSEKLASYQAARKDSTSLSPARGHSVCSTSSLYLQDLTAAASECIDPSVVFPYPLNDSSSPKSCTSSDSTAFSSSSDSLLSSESSPRATPEPLVLHEETPPTTSSDSEEEQDDEEEIDVVSVEKRQPPAKRSESGSSPSRGHSKPPHSPLVLKRCHVSTHQHNYAAPPSTRKDYPAAKRAKLDSGRVLKQISNNRKCSSPRSSDTEENDKRRTHNVLERQRRNELKRSFFALRDQIPELENNEKAPKVVILKKATAYILSVQADEHKLISEKDLLRKRREQLKHKLEQLRNSGA</sequence>
<keyword id="KW-0002">3D-structure</keyword>
<keyword id="KW-0007">Acetylation</keyword>
<keyword id="KW-0010">Activator</keyword>
<keyword id="KW-0024">Alternative initiation</keyword>
<keyword id="KW-0158">Chromosome</keyword>
<keyword id="KW-0963">Cytoplasm</keyword>
<keyword id="KW-0238">DNA-binding</keyword>
<keyword id="KW-0325">Glycoprotein</keyword>
<keyword id="KW-1017">Isopeptide bond</keyword>
<keyword id="KW-0539">Nucleus</keyword>
<keyword id="KW-0597">Phosphoprotein</keyword>
<keyword id="KW-0656">Proto-oncogene</keyword>
<keyword id="KW-1185">Reference proteome</keyword>
<keyword id="KW-0804">Transcription</keyword>
<keyword id="KW-0805">Transcription regulation</keyword>
<keyword id="KW-0832">Ubl conjugation</keyword>
<accession>P09416</accession>
<accession>A0A8L2Q2H7</accession>
<accession>Q6B500</accession>
<organism>
    <name type="scientific">Rattus norvegicus</name>
    <name type="common">Rat</name>
    <dbReference type="NCBI Taxonomy" id="10116"/>
    <lineage>
        <taxon>Eukaryota</taxon>
        <taxon>Metazoa</taxon>
        <taxon>Chordata</taxon>
        <taxon>Craniata</taxon>
        <taxon>Vertebrata</taxon>
        <taxon>Euteleostomi</taxon>
        <taxon>Mammalia</taxon>
        <taxon>Eutheria</taxon>
        <taxon>Euarchontoglires</taxon>
        <taxon>Glires</taxon>
        <taxon>Rodentia</taxon>
        <taxon>Myomorpha</taxon>
        <taxon>Muroidea</taxon>
        <taxon>Muridae</taxon>
        <taxon>Murinae</taxon>
        <taxon>Rattus</taxon>
    </lineage>
</organism>
<name>MYC_RAT</name>
<reference key="1">
    <citation type="journal article" date="1987" name="Nucleic Acids Res.">
        <title>Characterization of rat c-myc and adjacent regions.</title>
        <authorList>
            <person name="Hayashi K."/>
            <person name="Makino R."/>
            <person name="Kawamura H."/>
            <person name="Arisawa A."/>
            <person name="Yoneda K."/>
        </authorList>
    </citation>
    <scope>NUCLEOTIDE SEQUENCE [GENOMIC DNA]</scope>
</reference>
<reference key="2">
    <citation type="submission" date="2004-07" db="EMBL/GenBank/DDBJ databases">
        <authorList>
            <person name="Shull J.D."/>
            <person name="Buckles L.K."/>
        </authorList>
    </citation>
    <scope>NUCLEOTIDE SEQUENCE [MRNA]</scope>
    <source>
        <strain>ACI/SegHsd</strain>
        <strain>Brown Norway/SsNHsd</strain>
        <tissue>Spleen</tissue>
    </source>
</reference>
<reference key="3">
    <citation type="journal article" date="2004" name="Nature">
        <title>Genome sequence of the Brown Norway rat yields insights into mammalian evolution.</title>
        <authorList>
            <person name="Gibbs R.A."/>
            <person name="Weinstock G.M."/>
            <person name="Metzker M.L."/>
            <person name="Muzny D.M."/>
            <person name="Sodergren E.J."/>
            <person name="Scherer S."/>
            <person name="Scott G."/>
            <person name="Steffen D."/>
            <person name="Worley K.C."/>
            <person name="Burch P.E."/>
            <person name="Okwuonu G."/>
            <person name="Hines S."/>
            <person name="Lewis L."/>
            <person name="Deramo C."/>
            <person name="Delgado O."/>
            <person name="Dugan-Rocha S."/>
            <person name="Miner G."/>
            <person name="Morgan M."/>
            <person name="Hawes A."/>
            <person name="Gill R."/>
            <person name="Holt R.A."/>
            <person name="Adams M.D."/>
            <person name="Amanatides P.G."/>
            <person name="Baden-Tillson H."/>
            <person name="Barnstead M."/>
            <person name="Chin S."/>
            <person name="Evans C.A."/>
            <person name="Ferriera S."/>
            <person name="Fosler C."/>
            <person name="Glodek A."/>
            <person name="Gu Z."/>
            <person name="Jennings D."/>
            <person name="Kraft C.L."/>
            <person name="Nguyen T."/>
            <person name="Pfannkoch C.M."/>
            <person name="Sitter C."/>
            <person name="Sutton G.G."/>
            <person name="Venter J.C."/>
            <person name="Woodage T."/>
            <person name="Smith D."/>
            <person name="Lee H.-M."/>
            <person name="Gustafson E."/>
            <person name="Cahill P."/>
            <person name="Kana A."/>
            <person name="Doucette-Stamm L."/>
            <person name="Weinstock K."/>
            <person name="Fechtel K."/>
            <person name="Weiss R.B."/>
            <person name="Dunn D.M."/>
            <person name="Green E.D."/>
            <person name="Blakesley R.W."/>
            <person name="Bouffard G.G."/>
            <person name="De Jong P.J."/>
            <person name="Osoegawa K."/>
            <person name="Zhu B."/>
            <person name="Marra M."/>
            <person name="Schein J."/>
            <person name="Bosdet I."/>
            <person name="Fjell C."/>
            <person name="Jones S."/>
            <person name="Krzywinski M."/>
            <person name="Mathewson C."/>
            <person name="Siddiqui A."/>
            <person name="Wye N."/>
            <person name="McPherson J."/>
            <person name="Zhao S."/>
            <person name="Fraser C.M."/>
            <person name="Shetty J."/>
            <person name="Shatsman S."/>
            <person name="Geer K."/>
            <person name="Chen Y."/>
            <person name="Abramzon S."/>
            <person name="Nierman W.C."/>
            <person name="Havlak P.H."/>
            <person name="Chen R."/>
            <person name="Durbin K.J."/>
            <person name="Egan A."/>
            <person name="Ren Y."/>
            <person name="Song X.-Z."/>
            <person name="Li B."/>
            <person name="Liu Y."/>
            <person name="Qin X."/>
            <person name="Cawley S."/>
            <person name="Cooney A.J."/>
            <person name="D'Souza L.M."/>
            <person name="Martin K."/>
            <person name="Wu J.Q."/>
            <person name="Gonzalez-Garay M.L."/>
            <person name="Jackson A.R."/>
            <person name="Kalafus K.J."/>
            <person name="McLeod M.P."/>
            <person name="Milosavljevic A."/>
            <person name="Virk D."/>
            <person name="Volkov A."/>
            <person name="Wheeler D.A."/>
            <person name="Zhang Z."/>
            <person name="Bailey J.A."/>
            <person name="Eichler E.E."/>
            <person name="Tuzun E."/>
            <person name="Birney E."/>
            <person name="Mongin E."/>
            <person name="Ureta-Vidal A."/>
            <person name="Woodwark C."/>
            <person name="Zdobnov E."/>
            <person name="Bork P."/>
            <person name="Suyama M."/>
            <person name="Torrents D."/>
            <person name="Alexandersson M."/>
            <person name="Trask B.J."/>
            <person name="Young J.M."/>
            <person name="Huang H."/>
            <person name="Wang H."/>
            <person name="Xing H."/>
            <person name="Daniels S."/>
            <person name="Gietzen D."/>
            <person name="Schmidt J."/>
            <person name="Stevens K."/>
            <person name="Vitt U."/>
            <person name="Wingrove J."/>
            <person name="Camara F."/>
            <person name="Mar Alba M."/>
            <person name="Abril J.F."/>
            <person name="Guigo R."/>
            <person name="Smit A."/>
            <person name="Dubchak I."/>
            <person name="Rubin E.M."/>
            <person name="Couronne O."/>
            <person name="Poliakov A."/>
            <person name="Huebner N."/>
            <person name="Ganten D."/>
            <person name="Goesele C."/>
            <person name="Hummel O."/>
            <person name="Kreitler T."/>
            <person name="Lee Y.-A."/>
            <person name="Monti J."/>
            <person name="Schulz H."/>
            <person name="Zimdahl H."/>
            <person name="Himmelbauer H."/>
            <person name="Lehrach H."/>
            <person name="Jacob H.J."/>
            <person name="Bromberg S."/>
            <person name="Gullings-Handley J."/>
            <person name="Jensen-Seaman M.I."/>
            <person name="Kwitek A.E."/>
            <person name="Lazar J."/>
            <person name="Pasko D."/>
            <person name="Tonellato P.J."/>
            <person name="Twigger S."/>
            <person name="Ponting C.P."/>
            <person name="Duarte J.M."/>
            <person name="Rice S."/>
            <person name="Goodstadt L."/>
            <person name="Beatson S.A."/>
            <person name="Emes R.D."/>
            <person name="Winter E.E."/>
            <person name="Webber C."/>
            <person name="Brandt P."/>
            <person name="Nyakatura G."/>
            <person name="Adetobi M."/>
            <person name="Chiaromonte F."/>
            <person name="Elnitski L."/>
            <person name="Eswara P."/>
            <person name="Hardison R.C."/>
            <person name="Hou M."/>
            <person name="Kolbe D."/>
            <person name="Makova K."/>
            <person name="Miller W."/>
            <person name="Nekrutenko A."/>
            <person name="Riemer C."/>
            <person name="Schwartz S."/>
            <person name="Taylor J."/>
            <person name="Yang S."/>
            <person name="Zhang Y."/>
            <person name="Lindpaintner K."/>
            <person name="Andrews T.D."/>
            <person name="Caccamo M."/>
            <person name="Clamp M."/>
            <person name="Clarke L."/>
            <person name="Curwen V."/>
            <person name="Durbin R.M."/>
            <person name="Eyras E."/>
            <person name="Searle S.M."/>
            <person name="Cooper G.M."/>
            <person name="Batzoglou S."/>
            <person name="Brudno M."/>
            <person name="Sidow A."/>
            <person name="Stone E.A."/>
            <person name="Payseur B.A."/>
            <person name="Bourque G."/>
            <person name="Lopez-Otin C."/>
            <person name="Puente X.S."/>
            <person name="Chakrabarti K."/>
            <person name="Chatterji S."/>
            <person name="Dewey C."/>
            <person name="Pachter L."/>
            <person name="Bray N."/>
            <person name="Yap V.B."/>
            <person name="Caspi A."/>
            <person name="Tesler G."/>
            <person name="Pevzner P.A."/>
            <person name="Haussler D."/>
            <person name="Roskin K.M."/>
            <person name="Baertsch R."/>
            <person name="Clawson H."/>
            <person name="Furey T.S."/>
            <person name="Hinrichs A.S."/>
            <person name="Karolchik D."/>
            <person name="Kent W.J."/>
            <person name="Rosenbloom K.R."/>
            <person name="Trumbower H."/>
            <person name="Weirauch M."/>
            <person name="Cooper D.N."/>
            <person name="Stenson P.D."/>
            <person name="Ma B."/>
            <person name="Brent M."/>
            <person name="Arumugam M."/>
            <person name="Shteynberg D."/>
            <person name="Copley R.R."/>
            <person name="Taylor M.S."/>
            <person name="Riethman H."/>
            <person name="Mudunuri U."/>
            <person name="Peterson J."/>
            <person name="Guyer M."/>
            <person name="Felsenfeld A."/>
            <person name="Old S."/>
            <person name="Mockrin S."/>
            <person name="Collins F.S."/>
        </authorList>
    </citation>
    <scope>NUCLEOTIDE SEQUENCE [LARGE SCALE GENOMIC DNA]</scope>
    <source>
        <strain>Brown Norway</strain>
    </source>
</reference>
<reference key="4">
    <citation type="journal article" date="2004" name="Genome Res.">
        <title>The status, quality, and expansion of the NIH full-length cDNA project: the Mammalian Gene Collection (MGC).</title>
        <authorList>
            <consortium name="The MGC Project Team"/>
        </authorList>
    </citation>
    <scope>NUCLEOTIDE SEQUENCE [LARGE SCALE MRNA]</scope>
    <source>
        <tissue>Ovary</tissue>
    </source>
</reference>
<reference key="5">
    <citation type="journal article" date="1988" name="Cell">
        <title>A non-AUG translational initiation in c-myc exon 1 generates an N-terminally distinct protein whose synthesis is disrupted in Burkitt's lymphomas.</title>
        <authorList>
            <person name="Hann S.R."/>
            <person name="King M.W."/>
            <person name="Bentley D.L."/>
            <person name="Anderson C.W."/>
            <person name="Eisenman R.N."/>
        </authorList>
    </citation>
    <scope>ALTERNATIVE TRANSLATION INITIATION</scope>
</reference>
<reference key="6">
    <citation type="journal article" date="2010" name="PLoS ONE">
        <title>Direct reprogramming of rat neural precursor cells and fibroblasts into pluripotent stem cells.</title>
        <authorList>
            <person name="Chang M.Y."/>
            <person name="Kim D."/>
            <person name="Kim C.H."/>
            <person name="Kang H.C."/>
            <person name="Yang E."/>
            <person name="Moon J.I."/>
            <person name="Ko S."/>
            <person name="Park J."/>
            <person name="Park K.S."/>
            <person name="Lee K.A."/>
            <person name="Hwang D.Y."/>
            <person name="Chung Y."/>
            <person name="Lanza R."/>
            <person name="Kim K.S."/>
        </authorList>
    </citation>
    <scope>BIOTECHNOLOGY</scope>
</reference>
<reference key="7">
    <citation type="journal article" date="2007" name="EMBO J.">
        <title>Abelson interacting protein 1 (Abi-1) is essential for dendrite morphogenesis and synapse formation.</title>
        <authorList>
            <person name="Proepper C."/>
            <person name="Johannsen S."/>
            <person name="Liebau S."/>
            <person name="Dahl J."/>
            <person name="Vaida B."/>
            <person name="Bockmann J."/>
            <person name="Kreutz M.R."/>
            <person name="Gundelfinger E.D."/>
            <person name="Boeckers T.M."/>
        </authorList>
    </citation>
    <scope>FUNCTION IN TRANSCRIPTIONAL ACTIVATION</scope>
    <scope>INTERACTION WITH ABI1</scope>
</reference>
<reference evidence="11" key="8">
    <citation type="journal article" date="2022" name="Nucleic Acids Res.">
        <title>The MYC oncoprotein directly interacts with its chromatin cofactor PNUTS to recruit PP1 phosphatase.</title>
        <authorList>
            <person name="Wei Y."/>
            <person name="Redel C."/>
            <person name="Ahlner A."/>
            <person name="Lemak A."/>
            <person name="Johansson-Akhe I."/>
            <person name="Houliston S."/>
            <person name="Kenney T.M.G."/>
            <person name="Tamachi A."/>
            <person name="Morad V."/>
            <person name="Duan S."/>
            <person name="Andrews D.W."/>
            <person name="Wallner B."/>
            <person name="Sunnerhagen M."/>
            <person name="Arrowsmith C.H."/>
            <person name="Penn L.Z."/>
        </authorList>
    </citation>
    <scope>STRUCTURE BY NMR OF 27-77 IN COMPLEX WITH PPP1R10</scope>
</reference>